<organism>
    <name type="scientific">Desulforapulum autotrophicum (strain ATCC 43914 / DSM 3382 / VKM B-1955 / HRM2)</name>
    <name type="common">Desulfobacterium autotrophicum</name>
    <dbReference type="NCBI Taxonomy" id="177437"/>
    <lineage>
        <taxon>Bacteria</taxon>
        <taxon>Pseudomonadati</taxon>
        <taxon>Thermodesulfobacteriota</taxon>
        <taxon>Desulfobacteria</taxon>
        <taxon>Desulfobacterales</taxon>
        <taxon>Desulfobacteraceae</taxon>
        <taxon>Desulforapulum</taxon>
    </lineage>
</organism>
<keyword id="KW-0378">Hydrolase</keyword>
<keyword id="KW-0479">Metal-binding</keyword>
<keyword id="KW-0665">Pyrimidine biosynthesis</keyword>
<keyword id="KW-1185">Reference proteome</keyword>
<keyword id="KW-0862">Zinc</keyword>
<accession>C0QJ54</accession>
<comment type="function">
    <text evidence="1">Catalyzes the reversible cyclization of carbamoyl aspartate to dihydroorotate.</text>
</comment>
<comment type="catalytic activity">
    <reaction evidence="1">
        <text>(S)-dihydroorotate + H2O = N-carbamoyl-L-aspartate + H(+)</text>
        <dbReference type="Rhea" id="RHEA:24296"/>
        <dbReference type="ChEBI" id="CHEBI:15377"/>
        <dbReference type="ChEBI" id="CHEBI:15378"/>
        <dbReference type="ChEBI" id="CHEBI:30864"/>
        <dbReference type="ChEBI" id="CHEBI:32814"/>
        <dbReference type="EC" id="3.5.2.3"/>
    </reaction>
</comment>
<comment type="cofactor">
    <cofactor evidence="1">
        <name>Zn(2+)</name>
        <dbReference type="ChEBI" id="CHEBI:29105"/>
    </cofactor>
    <text evidence="1">Binds 2 Zn(2+) ions per subunit.</text>
</comment>
<comment type="pathway">
    <text evidence="1">Pyrimidine metabolism; UMP biosynthesis via de novo pathway; (S)-dihydroorotate from bicarbonate: step 3/3.</text>
</comment>
<comment type="similarity">
    <text evidence="1">Belongs to the metallo-dependent hydrolases superfamily. DHOase family. Class I DHOase subfamily.</text>
</comment>
<sequence>MLIRFKGAHIVDPGNINEQKDLLVKDGLVHALLDPGAADPEPGIDTVDVTGMLLVPGLIDLHVHLREPGHEYKETIQTGLMAAAKGGFTAVCPMPNTSPVNDNAQVTRFILDRAKAAGLSRVYPVGAITLGLKGETLAEYGEMKQAGMVAITDDGRPVENARVMRRAMEYATGLGLPVMSHSEDLSLARDGAMNEGSFATRIGIKGIPNAAESIMVMREIAIAELTHARVHIAHVSCEESVDAIRHGKQRGVQVTCETAPHYFTLTDKAVGDYDTHAKMNPPLRSEADRLAVIKGLQDGTIDCIATDHAPHSPLEKAVEFDQAAFGIIGLETSLVLSLKLVQDELLSMETLVEKMSRNPARFLGLDNRLIPGNPADITVIDPDRVHVIDPETFVSKSRNTPFAGIEVKGEVLLTMVEGRIIYQREI</sequence>
<evidence type="ECO:0000255" key="1">
    <source>
        <dbReference type="HAMAP-Rule" id="MF_00220"/>
    </source>
</evidence>
<feature type="chain" id="PRO_1000204251" description="Dihydroorotase">
    <location>
        <begin position="1"/>
        <end position="426"/>
    </location>
</feature>
<feature type="active site" evidence="1">
    <location>
        <position position="307"/>
    </location>
</feature>
<feature type="binding site" evidence="1">
    <location>
        <position position="62"/>
    </location>
    <ligand>
        <name>Zn(2+)</name>
        <dbReference type="ChEBI" id="CHEBI:29105"/>
        <label>1</label>
    </ligand>
</feature>
<feature type="binding site" evidence="1">
    <location>
        <begin position="64"/>
        <end position="66"/>
    </location>
    <ligand>
        <name>substrate</name>
    </ligand>
</feature>
<feature type="binding site" evidence="1">
    <location>
        <position position="64"/>
    </location>
    <ligand>
        <name>Zn(2+)</name>
        <dbReference type="ChEBI" id="CHEBI:29105"/>
        <label>1</label>
    </ligand>
</feature>
<feature type="binding site" evidence="1">
    <location>
        <position position="96"/>
    </location>
    <ligand>
        <name>substrate</name>
    </ligand>
</feature>
<feature type="binding site" evidence="1">
    <location>
        <position position="154"/>
    </location>
    <ligand>
        <name>Zn(2+)</name>
        <dbReference type="ChEBI" id="CHEBI:29105"/>
        <label>1</label>
    </ligand>
</feature>
<feature type="binding site" evidence="1">
    <location>
        <position position="154"/>
    </location>
    <ligand>
        <name>Zn(2+)</name>
        <dbReference type="ChEBI" id="CHEBI:29105"/>
        <label>2</label>
    </ligand>
</feature>
<feature type="binding site" evidence="1">
    <location>
        <position position="181"/>
    </location>
    <ligand>
        <name>Zn(2+)</name>
        <dbReference type="ChEBI" id="CHEBI:29105"/>
        <label>2</label>
    </ligand>
</feature>
<feature type="binding site" evidence="1">
    <location>
        <position position="234"/>
    </location>
    <ligand>
        <name>Zn(2+)</name>
        <dbReference type="ChEBI" id="CHEBI:29105"/>
        <label>2</label>
    </ligand>
</feature>
<feature type="binding site" evidence="1">
    <location>
        <position position="280"/>
    </location>
    <ligand>
        <name>substrate</name>
    </ligand>
</feature>
<feature type="binding site" evidence="1">
    <location>
        <position position="307"/>
    </location>
    <ligand>
        <name>Zn(2+)</name>
        <dbReference type="ChEBI" id="CHEBI:29105"/>
        <label>1</label>
    </ligand>
</feature>
<feature type="binding site" evidence="1">
    <location>
        <position position="311"/>
    </location>
    <ligand>
        <name>substrate</name>
    </ligand>
</feature>
<feature type="binding site" evidence="1">
    <location>
        <begin position="325"/>
        <end position="326"/>
    </location>
    <ligand>
        <name>substrate</name>
    </ligand>
</feature>
<name>PYRC_DESAH</name>
<protein>
    <recommendedName>
        <fullName evidence="1">Dihydroorotase</fullName>
        <shortName evidence="1">DHOase</shortName>
        <ecNumber evidence="1">3.5.2.3</ecNumber>
    </recommendedName>
</protein>
<reference key="1">
    <citation type="journal article" date="2009" name="Environ. Microbiol.">
        <title>Genome sequence of Desulfobacterium autotrophicum HRM2, a marine sulfate reducer oxidizing organic carbon completely to carbon dioxide.</title>
        <authorList>
            <person name="Strittmatter A.W."/>
            <person name="Liesegang H."/>
            <person name="Rabus R."/>
            <person name="Decker I."/>
            <person name="Amann J."/>
            <person name="Andres S."/>
            <person name="Henne A."/>
            <person name="Fricke W.F."/>
            <person name="Martinez-Arias R."/>
            <person name="Bartels D."/>
            <person name="Goesmann A."/>
            <person name="Krause L."/>
            <person name="Puehler A."/>
            <person name="Klenk H.P."/>
            <person name="Richter M."/>
            <person name="Schuler M."/>
            <person name="Gloeckner F.O."/>
            <person name="Meyerdierks A."/>
            <person name="Gottschalk G."/>
            <person name="Amann R."/>
        </authorList>
    </citation>
    <scope>NUCLEOTIDE SEQUENCE [LARGE SCALE GENOMIC DNA]</scope>
    <source>
        <strain>ATCC 43914 / DSM 3382 / VKM B-1955 / HRM2</strain>
    </source>
</reference>
<gene>
    <name evidence="1" type="primary">pyrC</name>
    <name type="ordered locus">HRM2_27770</name>
</gene>
<proteinExistence type="inferred from homology"/>
<dbReference type="EC" id="3.5.2.3" evidence="1"/>
<dbReference type="EMBL" id="CP001087">
    <property type="protein sequence ID" value="ACN15867.1"/>
    <property type="molecule type" value="Genomic_DNA"/>
</dbReference>
<dbReference type="RefSeq" id="WP_015904630.1">
    <property type="nucleotide sequence ID" value="NC_012108.1"/>
</dbReference>
<dbReference type="SMR" id="C0QJ54"/>
<dbReference type="STRING" id="177437.HRM2_27770"/>
<dbReference type="KEGG" id="dat:HRM2_27770"/>
<dbReference type="eggNOG" id="COG0044">
    <property type="taxonomic scope" value="Bacteria"/>
</dbReference>
<dbReference type="HOGENOM" id="CLU_015572_1_0_7"/>
<dbReference type="OrthoDB" id="9803027at2"/>
<dbReference type="UniPathway" id="UPA00070">
    <property type="reaction ID" value="UER00117"/>
</dbReference>
<dbReference type="Proteomes" id="UP000000442">
    <property type="component" value="Chromosome"/>
</dbReference>
<dbReference type="GO" id="GO:0005737">
    <property type="term" value="C:cytoplasm"/>
    <property type="evidence" value="ECO:0007669"/>
    <property type="project" value="TreeGrafter"/>
</dbReference>
<dbReference type="GO" id="GO:0004038">
    <property type="term" value="F:allantoinase activity"/>
    <property type="evidence" value="ECO:0007669"/>
    <property type="project" value="TreeGrafter"/>
</dbReference>
<dbReference type="GO" id="GO:0004151">
    <property type="term" value="F:dihydroorotase activity"/>
    <property type="evidence" value="ECO:0007669"/>
    <property type="project" value="UniProtKB-UniRule"/>
</dbReference>
<dbReference type="GO" id="GO:0008270">
    <property type="term" value="F:zinc ion binding"/>
    <property type="evidence" value="ECO:0007669"/>
    <property type="project" value="UniProtKB-UniRule"/>
</dbReference>
<dbReference type="GO" id="GO:0044205">
    <property type="term" value="P:'de novo' UMP biosynthetic process"/>
    <property type="evidence" value="ECO:0007669"/>
    <property type="project" value="UniProtKB-UniRule"/>
</dbReference>
<dbReference type="GO" id="GO:0006145">
    <property type="term" value="P:purine nucleobase catabolic process"/>
    <property type="evidence" value="ECO:0007669"/>
    <property type="project" value="TreeGrafter"/>
</dbReference>
<dbReference type="CDD" id="cd01317">
    <property type="entry name" value="DHOase_IIa"/>
    <property type="match status" value="1"/>
</dbReference>
<dbReference type="Gene3D" id="3.20.20.140">
    <property type="entry name" value="Metal-dependent hydrolases"/>
    <property type="match status" value="1"/>
</dbReference>
<dbReference type="Gene3D" id="2.30.40.10">
    <property type="entry name" value="Urease, subunit C, domain 1"/>
    <property type="match status" value="1"/>
</dbReference>
<dbReference type="HAMAP" id="MF_00220_B">
    <property type="entry name" value="PyrC_classI_B"/>
    <property type="match status" value="1"/>
</dbReference>
<dbReference type="InterPro" id="IPR006680">
    <property type="entry name" value="Amidohydro-rel"/>
</dbReference>
<dbReference type="InterPro" id="IPR004722">
    <property type="entry name" value="DHOase"/>
</dbReference>
<dbReference type="InterPro" id="IPR050138">
    <property type="entry name" value="DHOase/Allantoinase_Hydrolase"/>
</dbReference>
<dbReference type="InterPro" id="IPR002195">
    <property type="entry name" value="Dihydroorotase_CS"/>
</dbReference>
<dbReference type="InterPro" id="IPR011059">
    <property type="entry name" value="Metal-dep_hydrolase_composite"/>
</dbReference>
<dbReference type="InterPro" id="IPR032466">
    <property type="entry name" value="Metal_Hydrolase"/>
</dbReference>
<dbReference type="NCBIfam" id="TIGR00857">
    <property type="entry name" value="pyrC_multi"/>
    <property type="match status" value="1"/>
</dbReference>
<dbReference type="PANTHER" id="PTHR43668">
    <property type="entry name" value="ALLANTOINASE"/>
    <property type="match status" value="1"/>
</dbReference>
<dbReference type="PANTHER" id="PTHR43668:SF2">
    <property type="entry name" value="ALLANTOINASE"/>
    <property type="match status" value="1"/>
</dbReference>
<dbReference type="Pfam" id="PF01979">
    <property type="entry name" value="Amidohydro_1"/>
    <property type="match status" value="1"/>
</dbReference>
<dbReference type="SUPFAM" id="SSF51338">
    <property type="entry name" value="Composite domain of metallo-dependent hydrolases"/>
    <property type="match status" value="1"/>
</dbReference>
<dbReference type="SUPFAM" id="SSF51556">
    <property type="entry name" value="Metallo-dependent hydrolases"/>
    <property type="match status" value="1"/>
</dbReference>
<dbReference type="PROSITE" id="PS00482">
    <property type="entry name" value="DIHYDROOROTASE_1"/>
    <property type="match status" value="1"/>
</dbReference>
<dbReference type="PROSITE" id="PS00483">
    <property type="entry name" value="DIHYDROOROTASE_2"/>
    <property type="match status" value="1"/>
</dbReference>